<evidence type="ECO:0000255" key="1">
    <source>
        <dbReference type="HAMAP-Rule" id="MF_01038"/>
    </source>
</evidence>
<protein>
    <recommendedName>
        <fullName evidence="1">2,3-bisphosphoglycerate-independent phosphoglycerate mutase</fullName>
        <shortName evidence="1">BPG-independent PGAM</shortName>
        <shortName evidence="1">Phosphoglyceromutase</shortName>
        <shortName evidence="1">iPGM</shortName>
        <ecNumber evidence="1">5.4.2.12</ecNumber>
    </recommendedName>
</protein>
<organism>
    <name type="scientific">Geobacillus kaustophilus (strain HTA426)</name>
    <dbReference type="NCBI Taxonomy" id="235909"/>
    <lineage>
        <taxon>Bacteria</taxon>
        <taxon>Bacillati</taxon>
        <taxon>Bacillota</taxon>
        <taxon>Bacilli</taxon>
        <taxon>Bacillales</taxon>
        <taxon>Anoxybacillaceae</taxon>
        <taxon>Geobacillus</taxon>
        <taxon>Geobacillus thermoleovorans group</taxon>
    </lineage>
</organism>
<sequence>MSKQPVALIILDGFALRDETYGNAVAQANKPNFDRYWNEYPHTMLKACGEAVGLPEGQMGNSEVGHLNIGAGRIVYQSLTRVNIAIREGEFDRNETFLAAMNHVKQHGTSLHLFGLLSDGGVHSHIHHLYALLRLAAKEGVKRVYIHGFLDGRDVGPQTAPQYIKELQEKIKEYGVGEIATLSGRYYSMDRDKRWDRVEKAYRAMVYGEGPTYRDPLECIEDSYKHGIYDEFVLPSVIVREDGRPVATIQDNDAIIFYNFRPDRAIQISNTFTNEDFREFDRGPKHPKHLFFVCLTHFSETVKGYVAFKPTNLDNTLGEVLSQHGLRQLRIAETEKYPHVTFFMSGGREEKFPGEDRILINSPKVPTYDLKPEMSAYEVTDALLKEIEADKYDAIILNYANPDMVGHSGKLEPTIKAVEAVDECLGKVVDAILAKGGIAIITADHGNADEVLTPDGKPQTAHTTNPVPVIVTKKGIKLRDGGILGDLAPTMLDLLGLPQPKEMTGKSLIVK</sequence>
<feature type="chain" id="PRO_0000212149" description="2,3-bisphosphoglycerate-independent phosphoglycerate mutase">
    <location>
        <begin position="1"/>
        <end position="511"/>
    </location>
</feature>
<feature type="active site" description="Phosphoserine intermediate" evidence="1">
    <location>
        <position position="62"/>
    </location>
</feature>
<feature type="binding site" evidence="1">
    <location>
        <position position="12"/>
    </location>
    <ligand>
        <name>Mn(2+)</name>
        <dbReference type="ChEBI" id="CHEBI:29035"/>
        <label>2</label>
    </ligand>
</feature>
<feature type="binding site" evidence="1">
    <location>
        <position position="62"/>
    </location>
    <ligand>
        <name>Mn(2+)</name>
        <dbReference type="ChEBI" id="CHEBI:29035"/>
        <label>2</label>
    </ligand>
</feature>
<feature type="binding site" evidence="1">
    <location>
        <position position="123"/>
    </location>
    <ligand>
        <name>substrate</name>
    </ligand>
</feature>
<feature type="binding site" evidence="1">
    <location>
        <begin position="153"/>
        <end position="154"/>
    </location>
    <ligand>
        <name>substrate</name>
    </ligand>
</feature>
<feature type="binding site" evidence="1">
    <location>
        <position position="185"/>
    </location>
    <ligand>
        <name>substrate</name>
    </ligand>
</feature>
<feature type="binding site" evidence="1">
    <location>
        <position position="191"/>
    </location>
    <ligand>
        <name>substrate</name>
    </ligand>
</feature>
<feature type="binding site" evidence="1">
    <location>
        <begin position="261"/>
        <end position="264"/>
    </location>
    <ligand>
        <name>substrate</name>
    </ligand>
</feature>
<feature type="binding site" evidence="1">
    <location>
        <position position="336"/>
    </location>
    <ligand>
        <name>substrate</name>
    </ligand>
</feature>
<feature type="binding site" evidence="1">
    <location>
        <position position="403"/>
    </location>
    <ligand>
        <name>Mn(2+)</name>
        <dbReference type="ChEBI" id="CHEBI:29035"/>
        <label>1</label>
    </ligand>
</feature>
<feature type="binding site" evidence="1">
    <location>
        <position position="407"/>
    </location>
    <ligand>
        <name>Mn(2+)</name>
        <dbReference type="ChEBI" id="CHEBI:29035"/>
        <label>1</label>
    </ligand>
</feature>
<feature type="binding site" evidence="1">
    <location>
        <position position="444"/>
    </location>
    <ligand>
        <name>Mn(2+)</name>
        <dbReference type="ChEBI" id="CHEBI:29035"/>
        <label>2</label>
    </ligand>
</feature>
<feature type="binding site" evidence="1">
    <location>
        <position position="445"/>
    </location>
    <ligand>
        <name>Mn(2+)</name>
        <dbReference type="ChEBI" id="CHEBI:29035"/>
        <label>2</label>
    </ligand>
</feature>
<feature type="binding site" evidence="1">
    <location>
        <position position="462"/>
    </location>
    <ligand>
        <name>Mn(2+)</name>
        <dbReference type="ChEBI" id="CHEBI:29035"/>
        <label>1</label>
    </ligand>
</feature>
<feature type="modified residue" description="Phosphotyrosine" evidence="1">
    <location>
        <position position="36"/>
    </location>
</feature>
<accession>Q5KVE6</accession>
<comment type="function">
    <text evidence="1">Catalyzes the interconversion of 2-phosphoglycerate and 3-phosphoglycerate.</text>
</comment>
<comment type="catalytic activity">
    <reaction evidence="1">
        <text>(2R)-2-phosphoglycerate = (2R)-3-phosphoglycerate</text>
        <dbReference type="Rhea" id="RHEA:15901"/>
        <dbReference type="ChEBI" id="CHEBI:58272"/>
        <dbReference type="ChEBI" id="CHEBI:58289"/>
        <dbReference type="EC" id="5.4.2.12"/>
    </reaction>
</comment>
<comment type="cofactor">
    <cofactor evidence="1">
        <name>Mn(2+)</name>
        <dbReference type="ChEBI" id="CHEBI:29035"/>
    </cofactor>
    <text evidence="1">Binds 2 manganese ions per subunit.</text>
</comment>
<comment type="pathway">
    <text evidence="1">Carbohydrate degradation; glycolysis; pyruvate from D-glyceraldehyde 3-phosphate: step 3/5.</text>
</comment>
<comment type="subunit">
    <text evidence="1">Monomer.</text>
</comment>
<comment type="similarity">
    <text evidence="1">Belongs to the BPG-independent phosphoglycerate mutase family.</text>
</comment>
<gene>
    <name evidence="1" type="primary">gpmI</name>
    <name type="ordered locus">GK3055</name>
</gene>
<proteinExistence type="inferred from homology"/>
<name>GPMI_GEOKA</name>
<reference key="1">
    <citation type="journal article" date="2004" name="Nucleic Acids Res.">
        <title>Thermoadaptation trait revealed by the genome sequence of thermophilic Geobacillus kaustophilus.</title>
        <authorList>
            <person name="Takami H."/>
            <person name="Takaki Y."/>
            <person name="Chee G.-J."/>
            <person name="Nishi S."/>
            <person name="Shimamura S."/>
            <person name="Suzuki H."/>
            <person name="Matsui S."/>
            <person name="Uchiyama I."/>
        </authorList>
    </citation>
    <scope>NUCLEOTIDE SEQUENCE [LARGE SCALE GENOMIC DNA]</scope>
    <source>
        <strain>HTA426</strain>
    </source>
</reference>
<keyword id="KW-0324">Glycolysis</keyword>
<keyword id="KW-0413">Isomerase</keyword>
<keyword id="KW-0464">Manganese</keyword>
<keyword id="KW-0479">Metal-binding</keyword>
<keyword id="KW-0597">Phosphoprotein</keyword>
<keyword id="KW-1185">Reference proteome</keyword>
<dbReference type="EC" id="5.4.2.12" evidence="1"/>
<dbReference type="EMBL" id="BA000043">
    <property type="protein sequence ID" value="BAD77340.1"/>
    <property type="molecule type" value="Genomic_DNA"/>
</dbReference>
<dbReference type="RefSeq" id="WP_011232525.1">
    <property type="nucleotide sequence ID" value="NC_006510.1"/>
</dbReference>
<dbReference type="SMR" id="Q5KVE6"/>
<dbReference type="STRING" id="235909.GK3055"/>
<dbReference type="KEGG" id="gka:GK3055"/>
<dbReference type="PATRIC" id="fig|235909.7.peg.3261"/>
<dbReference type="eggNOG" id="COG0696">
    <property type="taxonomic scope" value="Bacteria"/>
</dbReference>
<dbReference type="HOGENOM" id="CLU_026099_2_0_9"/>
<dbReference type="UniPathway" id="UPA00109">
    <property type="reaction ID" value="UER00186"/>
</dbReference>
<dbReference type="Proteomes" id="UP000001172">
    <property type="component" value="Chromosome"/>
</dbReference>
<dbReference type="GO" id="GO:0005829">
    <property type="term" value="C:cytosol"/>
    <property type="evidence" value="ECO:0007669"/>
    <property type="project" value="TreeGrafter"/>
</dbReference>
<dbReference type="GO" id="GO:0030145">
    <property type="term" value="F:manganese ion binding"/>
    <property type="evidence" value="ECO:0007669"/>
    <property type="project" value="UniProtKB-UniRule"/>
</dbReference>
<dbReference type="GO" id="GO:0004619">
    <property type="term" value="F:phosphoglycerate mutase activity"/>
    <property type="evidence" value="ECO:0007669"/>
    <property type="project" value="UniProtKB-EC"/>
</dbReference>
<dbReference type="GO" id="GO:0006007">
    <property type="term" value="P:glucose catabolic process"/>
    <property type="evidence" value="ECO:0007669"/>
    <property type="project" value="InterPro"/>
</dbReference>
<dbReference type="GO" id="GO:0006096">
    <property type="term" value="P:glycolytic process"/>
    <property type="evidence" value="ECO:0007669"/>
    <property type="project" value="UniProtKB-UniRule"/>
</dbReference>
<dbReference type="CDD" id="cd16010">
    <property type="entry name" value="iPGM"/>
    <property type="match status" value="1"/>
</dbReference>
<dbReference type="FunFam" id="3.40.1450.10:FF:000001">
    <property type="entry name" value="2,3-bisphosphoglycerate-independent phosphoglycerate mutase"/>
    <property type="match status" value="1"/>
</dbReference>
<dbReference type="FunFam" id="3.40.720.10:FF:000001">
    <property type="entry name" value="2,3-bisphosphoglycerate-independent phosphoglycerate mutase"/>
    <property type="match status" value="1"/>
</dbReference>
<dbReference type="Gene3D" id="3.40.720.10">
    <property type="entry name" value="Alkaline Phosphatase, subunit A"/>
    <property type="match status" value="1"/>
</dbReference>
<dbReference type="Gene3D" id="3.40.1450.10">
    <property type="entry name" value="BPG-independent phosphoglycerate mutase, domain B"/>
    <property type="match status" value="1"/>
</dbReference>
<dbReference type="HAMAP" id="MF_01038">
    <property type="entry name" value="GpmI"/>
    <property type="match status" value="1"/>
</dbReference>
<dbReference type="InterPro" id="IPR017850">
    <property type="entry name" value="Alkaline_phosphatase_core_sf"/>
</dbReference>
<dbReference type="InterPro" id="IPR011258">
    <property type="entry name" value="BPG-indep_PGM_N"/>
</dbReference>
<dbReference type="InterPro" id="IPR006124">
    <property type="entry name" value="Metalloenzyme"/>
</dbReference>
<dbReference type="InterPro" id="IPR036646">
    <property type="entry name" value="PGAM_B_sf"/>
</dbReference>
<dbReference type="InterPro" id="IPR005995">
    <property type="entry name" value="Pgm_bpd_ind"/>
</dbReference>
<dbReference type="NCBIfam" id="TIGR01307">
    <property type="entry name" value="pgm_bpd_ind"/>
    <property type="match status" value="1"/>
</dbReference>
<dbReference type="PANTHER" id="PTHR31637">
    <property type="entry name" value="2,3-BISPHOSPHOGLYCERATE-INDEPENDENT PHOSPHOGLYCERATE MUTASE"/>
    <property type="match status" value="1"/>
</dbReference>
<dbReference type="PANTHER" id="PTHR31637:SF0">
    <property type="entry name" value="2,3-BISPHOSPHOGLYCERATE-INDEPENDENT PHOSPHOGLYCERATE MUTASE"/>
    <property type="match status" value="1"/>
</dbReference>
<dbReference type="Pfam" id="PF06415">
    <property type="entry name" value="iPGM_N"/>
    <property type="match status" value="1"/>
</dbReference>
<dbReference type="Pfam" id="PF01676">
    <property type="entry name" value="Metalloenzyme"/>
    <property type="match status" value="1"/>
</dbReference>
<dbReference type="PIRSF" id="PIRSF001492">
    <property type="entry name" value="IPGAM"/>
    <property type="match status" value="1"/>
</dbReference>
<dbReference type="SUPFAM" id="SSF64158">
    <property type="entry name" value="2,3-Bisphosphoglycerate-independent phosphoglycerate mutase, substrate-binding domain"/>
    <property type="match status" value="1"/>
</dbReference>
<dbReference type="SUPFAM" id="SSF53649">
    <property type="entry name" value="Alkaline phosphatase-like"/>
    <property type="match status" value="1"/>
</dbReference>